<name>PINS_FRAAN</name>
<feature type="chain" id="PRO_0000407984" description="Putative pinene synthase">
    <location>
        <begin position="1"/>
        <end position="252"/>
    </location>
</feature>
<keyword id="KW-0456">Lyase</keyword>
<organism>
    <name type="scientific">Fragaria ananassa</name>
    <name type="common">Strawberry</name>
    <name type="synonym">Fragaria chiloensis x Fragaria virginiana</name>
    <dbReference type="NCBI Taxonomy" id="3747"/>
    <lineage>
        <taxon>Eukaryota</taxon>
        <taxon>Viridiplantae</taxon>
        <taxon>Streptophyta</taxon>
        <taxon>Embryophyta</taxon>
        <taxon>Tracheophyta</taxon>
        <taxon>Spermatophyta</taxon>
        <taxon>Magnoliopsida</taxon>
        <taxon>eudicotyledons</taxon>
        <taxon>Gunneridae</taxon>
        <taxon>Pentapetalae</taxon>
        <taxon>rosids</taxon>
        <taxon>fabids</taxon>
        <taxon>Rosales</taxon>
        <taxon>Rosaceae</taxon>
        <taxon>Rosoideae</taxon>
        <taxon>Potentilleae</taxon>
        <taxon>Fragariinae</taxon>
        <taxon>Fragaria</taxon>
    </lineage>
</organism>
<comment type="miscellaneous">
    <text>When compared with the genomic sequence of the wild strawberry, an insertion of two tandem cytosine nucleotides in the middle of the coding region caused a frameshift that was followed directly by a stop codon, leading to the potential production of a shorter, probably non-functional protein.</text>
</comment>
<comment type="similarity">
    <text evidence="1">Belongs to the terpene synthase family. Tpsa subfamily.</text>
</comment>
<comment type="caution">
    <text evidence="1">Could be the product of a pseudogene.</text>
</comment>
<accession>P0CV97</accession>
<evidence type="ECO:0000305" key="1"/>
<protein>
    <recommendedName>
        <fullName>Putative pinene synthase</fullName>
    </recommendedName>
</protein>
<proteinExistence type="uncertain"/>
<sequence length="252" mass="29144">MPVHATPAAESQIISMPEWRRTANFKPSVWGDRFANYAEDIITQTQMQEQVEELKQVRKEVFTNAADDSSHQLKPIDEIQRLGVAYHFESEIDQALERIHETYQDIHDGGDLYNVALRFRLLRRHGYNVSCDVFNKFKDTNGDYKKSLVTDLSGMLSFYEAAHLRVHGEKLLEEALVFTTTHLQSASAKSSLLKTQITEAVERLLKTMERLGARRYMSIYQDEASYSENLLKLAKLDFNWQCLHKKELSDIP</sequence>
<dbReference type="EMBL" id="AX529022">
    <property type="protein sequence ID" value="CAD57091.1"/>
    <property type="molecule type" value="Unassigned_DNA"/>
</dbReference>
<dbReference type="SMR" id="P0CV97"/>
<dbReference type="GO" id="GO:0010333">
    <property type="term" value="F:terpene synthase activity"/>
    <property type="evidence" value="ECO:0007669"/>
    <property type="project" value="InterPro"/>
</dbReference>
<dbReference type="GO" id="GO:0016114">
    <property type="term" value="P:terpenoid biosynthetic process"/>
    <property type="evidence" value="ECO:0007669"/>
    <property type="project" value="InterPro"/>
</dbReference>
<dbReference type="FunFam" id="1.50.10.130:FF:000001">
    <property type="entry name" value="Isoprene synthase, chloroplastic"/>
    <property type="match status" value="1"/>
</dbReference>
<dbReference type="Gene3D" id="1.50.10.130">
    <property type="entry name" value="Terpene synthase, N-terminal domain"/>
    <property type="match status" value="1"/>
</dbReference>
<dbReference type="InterPro" id="IPR001906">
    <property type="entry name" value="Terpene_synth_N"/>
</dbReference>
<dbReference type="InterPro" id="IPR036965">
    <property type="entry name" value="Terpene_synth_N_sf"/>
</dbReference>
<dbReference type="InterPro" id="IPR050148">
    <property type="entry name" value="Terpene_synthase-like"/>
</dbReference>
<dbReference type="InterPro" id="IPR008930">
    <property type="entry name" value="Terpenoid_cyclase/PrenylTrfase"/>
</dbReference>
<dbReference type="PANTHER" id="PTHR31225:SF251">
    <property type="entry name" value="(-)-GERMACRENE D SYNTHASE-LIKE ISOFORM X2"/>
    <property type="match status" value="1"/>
</dbReference>
<dbReference type="PANTHER" id="PTHR31225">
    <property type="entry name" value="OS04G0344100 PROTEIN-RELATED"/>
    <property type="match status" value="1"/>
</dbReference>
<dbReference type="Pfam" id="PF01397">
    <property type="entry name" value="Terpene_synth"/>
    <property type="match status" value="1"/>
</dbReference>
<dbReference type="SUPFAM" id="SSF48239">
    <property type="entry name" value="Terpenoid cyclases/Protein prenyltransferases"/>
    <property type="match status" value="1"/>
</dbReference>
<reference key="1">
    <citation type="patent" date="2002-08-22" number="WO02064764">
        <title>Isoprenoid synthases.</title>
        <authorList>
            <person name="Aharoni A."/>
            <person name="Jongsma M.A."/>
            <person name="Verhoeven H.A."/>
            <person name="Bouwmeester H.J."/>
        </authorList>
    </citation>
    <scope>NUCLEOTIDE SEQUENCE [GENOMIC DNA / MRNA]</scope>
    <source>
        <strain>cv. Elsanta</strain>
    </source>
</reference>
<reference key="2">
    <citation type="journal article" date="2004" name="Plant Cell">
        <title>Gain and loss of fruit flavor compounds produced by wild and cultivated strawberry species.</title>
        <authorList>
            <person name="Aharoni A."/>
            <person name="Giri A.P."/>
            <person name="Verstappen F.W."/>
            <person name="Bertea C.M."/>
            <person name="Sevenier R."/>
            <person name="Sun Z."/>
            <person name="Jongsma M.A."/>
            <person name="Schwab W."/>
            <person name="Bouwmeester H.J."/>
        </authorList>
    </citation>
    <scope>NUCLEOTIDE SEQUENCE [GENOMIC DNA / MRNA]</scope>
    <source>
        <strain>cv. Elsanta</strain>
    </source>
</reference>